<protein>
    <recommendedName>
        <fullName evidence="1">Histidine ammonia-lyase</fullName>
        <shortName evidence="1">Histidase</shortName>
        <ecNumber evidence="1">4.3.1.3</ecNumber>
    </recommendedName>
</protein>
<name>HUTH_BURCM</name>
<keyword id="KW-0963">Cytoplasm</keyword>
<keyword id="KW-0369">Histidine metabolism</keyword>
<keyword id="KW-0456">Lyase</keyword>
<proteinExistence type="inferred from homology"/>
<evidence type="ECO:0000255" key="1">
    <source>
        <dbReference type="HAMAP-Rule" id="MF_00229"/>
    </source>
</evidence>
<feature type="chain" id="PRO_1000021549" description="Histidine ammonia-lyase">
    <location>
        <begin position="1"/>
        <end position="507"/>
    </location>
</feature>
<feature type="modified residue" description="2,3-didehydroalanine (Ser)" evidence="1">
    <location>
        <position position="142"/>
    </location>
</feature>
<feature type="cross-link" description="5-imidazolinone (Ala-Gly)" evidence="1">
    <location>
        <begin position="141"/>
        <end position="143"/>
    </location>
</feature>
<dbReference type="EC" id="4.3.1.3" evidence="1"/>
<dbReference type="EMBL" id="CP000440">
    <property type="protein sequence ID" value="ABI87767.1"/>
    <property type="molecule type" value="Genomic_DNA"/>
</dbReference>
<dbReference type="RefSeq" id="WP_011657420.1">
    <property type="nucleotide sequence ID" value="NZ_CP009798.1"/>
</dbReference>
<dbReference type="SMR" id="Q0BDK6"/>
<dbReference type="GeneID" id="93085586"/>
<dbReference type="KEGG" id="bam:Bamb_2211"/>
<dbReference type="PATRIC" id="fig|339670.21.peg.2723"/>
<dbReference type="eggNOG" id="COG2986">
    <property type="taxonomic scope" value="Bacteria"/>
</dbReference>
<dbReference type="UniPathway" id="UPA00379">
    <property type="reaction ID" value="UER00549"/>
</dbReference>
<dbReference type="Proteomes" id="UP000000662">
    <property type="component" value="Chromosome 1"/>
</dbReference>
<dbReference type="GO" id="GO:0005737">
    <property type="term" value="C:cytoplasm"/>
    <property type="evidence" value="ECO:0007669"/>
    <property type="project" value="UniProtKB-SubCell"/>
</dbReference>
<dbReference type="GO" id="GO:0004397">
    <property type="term" value="F:histidine ammonia-lyase activity"/>
    <property type="evidence" value="ECO:0007669"/>
    <property type="project" value="UniProtKB-UniRule"/>
</dbReference>
<dbReference type="GO" id="GO:0019556">
    <property type="term" value="P:L-histidine catabolic process to glutamate and formamide"/>
    <property type="evidence" value="ECO:0007669"/>
    <property type="project" value="UniProtKB-UniPathway"/>
</dbReference>
<dbReference type="GO" id="GO:0019557">
    <property type="term" value="P:L-histidine catabolic process to glutamate and formate"/>
    <property type="evidence" value="ECO:0007669"/>
    <property type="project" value="UniProtKB-UniPathway"/>
</dbReference>
<dbReference type="CDD" id="cd00332">
    <property type="entry name" value="PAL-HAL"/>
    <property type="match status" value="1"/>
</dbReference>
<dbReference type="FunFam" id="1.10.275.10:FF:000005">
    <property type="entry name" value="Histidine ammonia-lyase"/>
    <property type="match status" value="1"/>
</dbReference>
<dbReference type="FunFam" id="1.20.200.10:FF:000003">
    <property type="entry name" value="Histidine ammonia-lyase"/>
    <property type="match status" value="1"/>
</dbReference>
<dbReference type="Gene3D" id="1.20.200.10">
    <property type="entry name" value="Fumarase/aspartase (Central domain)"/>
    <property type="match status" value="1"/>
</dbReference>
<dbReference type="Gene3D" id="1.10.275.10">
    <property type="entry name" value="Fumarase/aspartase (N-terminal domain)"/>
    <property type="match status" value="1"/>
</dbReference>
<dbReference type="HAMAP" id="MF_00229">
    <property type="entry name" value="His_ammonia_lyase"/>
    <property type="match status" value="1"/>
</dbReference>
<dbReference type="InterPro" id="IPR001106">
    <property type="entry name" value="Aromatic_Lyase"/>
</dbReference>
<dbReference type="InterPro" id="IPR024083">
    <property type="entry name" value="Fumarase/histidase_N"/>
</dbReference>
<dbReference type="InterPro" id="IPR005921">
    <property type="entry name" value="HutH"/>
</dbReference>
<dbReference type="InterPro" id="IPR008948">
    <property type="entry name" value="L-Aspartase-like"/>
</dbReference>
<dbReference type="InterPro" id="IPR022313">
    <property type="entry name" value="Phe/His_NH3-lyase_AS"/>
</dbReference>
<dbReference type="NCBIfam" id="TIGR01225">
    <property type="entry name" value="hutH"/>
    <property type="match status" value="1"/>
</dbReference>
<dbReference type="NCBIfam" id="NF006871">
    <property type="entry name" value="PRK09367.1"/>
    <property type="match status" value="1"/>
</dbReference>
<dbReference type="PANTHER" id="PTHR10362">
    <property type="entry name" value="HISTIDINE AMMONIA-LYASE"/>
    <property type="match status" value="1"/>
</dbReference>
<dbReference type="Pfam" id="PF00221">
    <property type="entry name" value="Lyase_aromatic"/>
    <property type="match status" value="1"/>
</dbReference>
<dbReference type="SUPFAM" id="SSF48557">
    <property type="entry name" value="L-aspartase-like"/>
    <property type="match status" value="1"/>
</dbReference>
<dbReference type="PROSITE" id="PS00488">
    <property type="entry name" value="PAL_HISTIDASE"/>
    <property type="match status" value="1"/>
</dbReference>
<gene>
    <name evidence="1" type="primary">hutH</name>
    <name type="ordered locus">Bamb_2211</name>
</gene>
<comment type="catalytic activity">
    <reaction evidence="1">
        <text>L-histidine = trans-urocanate + NH4(+)</text>
        <dbReference type="Rhea" id="RHEA:21232"/>
        <dbReference type="ChEBI" id="CHEBI:17771"/>
        <dbReference type="ChEBI" id="CHEBI:28938"/>
        <dbReference type="ChEBI" id="CHEBI:57595"/>
        <dbReference type="EC" id="4.3.1.3"/>
    </reaction>
</comment>
<comment type="pathway">
    <text evidence="1">Amino-acid degradation; L-histidine degradation into L-glutamate; N-formimidoyl-L-glutamate from L-histidine: step 1/3.</text>
</comment>
<comment type="subcellular location">
    <subcellularLocation>
        <location evidence="1">Cytoplasm</location>
    </subcellularLocation>
</comment>
<comment type="PTM">
    <text evidence="1">Contains an active site 4-methylidene-imidazol-5-one (MIO), which is formed autocatalytically by cyclization and dehydration of residues Ala-Ser-Gly.</text>
</comment>
<comment type="similarity">
    <text evidence="1">Belongs to the PAL/histidase family.</text>
</comment>
<organism>
    <name type="scientific">Burkholderia ambifaria (strain ATCC BAA-244 / DSM 16087 / CCUG 44356 / LMG 19182 / AMMD)</name>
    <name type="common">Burkholderia cepacia (strain AMMD)</name>
    <dbReference type="NCBI Taxonomy" id="339670"/>
    <lineage>
        <taxon>Bacteria</taxon>
        <taxon>Pseudomonadati</taxon>
        <taxon>Pseudomonadota</taxon>
        <taxon>Betaproteobacteria</taxon>
        <taxon>Burkholderiales</taxon>
        <taxon>Burkholderiaceae</taxon>
        <taxon>Burkholderia</taxon>
        <taxon>Burkholderia cepacia complex</taxon>
    </lineage>
</organism>
<reference key="1">
    <citation type="submission" date="2006-08" db="EMBL/GenBank/DDBJ databases">
        <title>Complete sequence of chromosome 1 of Burkholderia cepacia AMMD.</title>
        <authorList>
            <person name="Copeland A."/>
            <person name="Lucas S."/>
            <person name="Lapidus A."/>
            <person name="Barry K."/>
            <person name="Detter J.C."/>
            <person name="Glavina del Rio T."/>
            <person name="Hammon N."/>
            <person name="Israni S."/>
            <person name="Pitluck S."/>
            <person name="Bruce D."/>
            <person name="Chain P."/>
            <person name="Malfatti S."/>
            <person name="Shin M."/>
            <person name="Vergez L."/>
            <person name="Schmutz J."/>
            <person name="Larimer F."/>
            <person name="Land M."/>
            <person name="Hauser L."/>
            <person name="Kyrpides N."/>
            <person name="Kim E."/>
            <person name="Parke J."/>
            <person name="Coenye T."/>
            <person name="Konstantinidis K."/>
            <person name="Ramette A."/>
            <person name="Tiedje J."/>
            <person name="Richardson P."/>
        </authorList>
    </citation>
    <scope>NUCLEOTIDE SEQUENCE [LARGE SCALE GENOMIC DNA]</scope>
    <source>
        <strain>ATCC BAA-244 / DSM 16087 / CCUG 44356 / LMG 19182 / AMMD</strain>
    </source>
</reference>
<accession>Q0BDK6</accession>
<sequence>MITLTPGHLTLPQLRKIARESVQLTLDPASFAKIDAGAKAVADIAAKGEPAYGINTGFGRLASTHIPHDQLELLQKNLVLSHAVGVGEPMARSSVRLLMALKLSSLGRGHSGIRREVMDALITLFNADVLPLIPVKGSVGASGDLAPLAHMSAVLLGVGEVFIRGERASALDGLRVAGLAPLTLQAKEGLALLNGTQASTALALDNMFSIEDLYRTALVAGALSVDAAAGSVKPFDARIHELRGHRGQIDAAAAYRDLLDGSPINQSHRDCDKVQDPYSLRCQPQVMGACLDQMRHAADVLLIEANAVSDNPLIFPDTGEVLSGGNFHAEPVAFAADNLALAAAEIGALAERRIALLIDATLSGLPPFLVKDGGVNSGFMIAHVTAAALASENKTLAHPASVDSLPTSANQEDHVSMATFAARKLADIADNTKYILAIELLAAAQGVDLRAPYHTSPKLAPVMETIRGHVAHYELDHYFAPDIAVIAKLVSERAFAKVAPFSFASEQ</sequence>